<dbReference type="EMBL" id="X78726">
    <property type="protein sequence ID" value="CAA55375.1"/>
    <property type="molecule type" value="Genomic_DNA"/>
</dbReference>
<dbReference type="EMBL" id="AE002162">
    <property type="status" value="NOT_ANNOTATED_CDS"/>
    <property type="molecule type" value="Genomic_DNA"/>
</dbReference>
<dbReference type="PIR" id="S44162">
    <property type="entry name" value="S44162"/>
</dbReference>
<dbReference type="RefSeq" id="WP_010231986.1">
    <property type="nucleotide sequence ID" value="NZ_ACOV01000005.1"/>
</dbReference>
<dbReference type="OrthoDB" id="17166at2"/>
<dbReference type="Proteomes" id="UP000000800">
    <property type="component" value="Plasmid pMoPn"/>
</dbReference>
<proteinExistence type="predicted"/>
<reference key="1">
    <citation type="journal article" date="1997" name="Microbiology">
        <title>Plasmid diversity in Chlamydia.</title>
        <authorList>
            <person name="Thomas N.S."/>
            <person name="Lusher M."/>
            <person name="Storey C.C."/>
            <person name="Clarke I.N."/>
        </authorList>
    </citation>
    <scope>NUCLEOTIDE SEQUENCE [GENOMIC DNA]</scope>
    <source>
        <strain>MoPn / Nigg</strain>
    </source>
</reference>
<reference key="2">
    <citation type="journal article" date="2000" name="Nucleic Acids Res.">
        <title>Genome sequences of Chlamydia trachomatis MoPn and Chlamydia pneumoniae AR39.</title>
        <authorList>
            <person name="Read T.D."/>
            <person name="Brunham R.C."/>
            <person name="Shen C."/>
            <person name="Gill S.R."/>
            <person name="Heidelberg J.F."/>
            <person name="White O."/>
            <person name="Hickey E.K."/>
            <person name="Peterson J.D."/>
            <person name="Utterback T.R."/>
            <person name="Berry K.J."/>
            <person name="Bass S."/>
            <person name="Linher K.D."/>
            <person name="Weidman J.F."/>
            <person name="Khouri H.M."/>
            <person name="Craven B."/>
            <person name="Bowman C."/>
            <person name="Dodson R.J."/>
            <person name="Gwinn M.L."/>
            <person name="Nelson W.C."/>
            <person name="DeBoy R.T."/>
            <person name="Kolonay J.F."/>
            <person name="McClarty G."/>
            <person name="Salzberg S.L."/>
            <person name="Eisen J.A."/>
            <person name="Fraser C.M."/>
        </authorList>
    </citation>
    <scope>NUCLEOTIDE SEQUENCE [LARGE SCALE GENOMIC DNA]</scope>
    <source>
        <strain>MoPn / Nigg</strain>
    </source>
</reference>
<gene>
    <name type="ordered locus">TC_A03.1</name>
</gene>
<name>GP2D_CHLMU</name>
<sequence>MVNYSNCHFIRSPIHLENQKFGRRPGQLIKISPKLAQNGLVEVIGLDFLSSHYHALAAIQRLLTATNYKGNTKGVVLSRESNSFQFEGWIPRIRFTKTEFLEAYGVKRYKTSRNKYEFSGKESETALEALYHLGHQPFLIVATRTRWNNGTPILDRYQTLSPIIRIYEGWEGLTDEENTEIDVTPFNSPSTRKHKGFIVEPCPILVDQIDSYFVVKPANVYQEIKMRFPNASRYAYTFIDWIITASAKKKRKLTKENSWPENLSLNVNVKSLAYILRMNRYISTRNWKKIEMAIDKCVEIAIQLGWLSSRKRVEFLEASKLSKKEILYLNKERFEEITRKSKEQMNQFEQEFN</sequence>
<feature type="chain" id="PRO_0000218339" description="Virulence plasmid protein pGP2-D">
    <location>
        <begin position="1"/>
        <end position="353"/>
    </location>
</feature>
<organism>
    <name type="scientific">Chlamydia muridarum (strain MoPn / Nigg)</name>
    <dbReference type="NCBI Taxonomy" id="243161"/>
    <lineage>
        <taxon>Bacteria</taxon>
        <taxon>Pseudomonadati</taxon>
        <taxon>Chlamydiota</taxon>
        <taxon>Chlamydiia</taxon>
        <taxon>Chlamydiales</taxon>
        <taxon>Chlamydiaceae</taxon>
        <taxon>Chlamydia/Chlamydophila group</taxon>
        <taxon>Chlamydia</taxon>
    </lineage>
</organism>
<accession>Q46438</accession>
<protein>
    <recommendedName>
        <fullName>Virulence plasmid protein pGP2-D</fullName>
    </recommendedName>
</protein>
<keyword id="KW-0614">Plasmid</keyword>
<geneLocation type="plasmid">
    <name>pMoPn</name>
</geneLocation>